<proteinExistence type="evidence at protein level"/>
<accession>P0AF54</accession>
<accession>P32706</accession>
<accession>Q2M6N6</accession>
<protein>
    <recommendedName>
        <fullName>Inner membrane protein YjcH</fullName>
    </recommendedName>
</protein>
<reference key="1">
    <citation type="journal article" date="1993" name="Nucleic Acids Res.">
        <title>Analysis of the Escherichia coli genome. IV. DNA sequence of the region from 89.2 to 92.8 minutes.</title>
        <authorList>
            <person name="Blattner F.R."/>
            <person name="Burland V.D."/>
            <person name="Plunkett G. III"/>
            <person name="Sofia H.J."/>
            <person name="Daniels D.L."/>
        </authorList>
    </citation>
    <scope>NUCLEOTIDE SEQUENCE [LARGE SCALE GENOMIC DNA]</scope>
    <source>
        <strain>K12 / MG1655 / ATCC 47076</strain>
    </source>
</reference>
<reference key="2">
    <citation type="journal article" date="1997" name="Science">
        <title>The complete genome sequence of Escherichia coli K-12.</title>
        <authorList>
            <person name="Blattner F.R."/>
            <person name="Plunkett G. III"/>
            <person name="Bloch C.A."/>
            <person name="Perna N.T."/>
            <person name="Burland V."/>
            <person name="Riley M."/>
            <person name="Collado-Vides J."/>
            <person name="Glasner J.D."/>
            <person name="Rode C.K."/>
            <person name="Mayhew G.F."/>
            <person name="Gregor J."/>
            <person name="Davis N.W."/>
            <person name="Kirkpatrick H.A."/>
            <person name="Goeden M.A."/>
            <person name="Rose D.J."/>
            <person name="Mau B."/>
            <person name="Shao Y."/>
        </authorList>
    </citation>
    <scope>NUCLEOTIDE SEQUENCE [LARGE SCALE GENOMIC DNA]</scope>
    <source>
        <strain>K12 / MG1655 / ATCC 47076</strain>
    </source>
</reference>
<reference key="3">
    <citation type="journal article" date="2006" name="Mol. Syst. Biol.">
        <title>Highly accurate genome sequences of Escherichia coli K-12 strains MG1655 and W3110.</title>
        <authorList>
            <person name="Hayashi K."/>
            <person name="Morooka N."/>
            <person name="Yamamoto Y."/>
            <person name="Fujita K."/>
            <person name="Isono K."/>
            <person name="Choi S."/>
            <person name="Ohtsubo E."/>
            <person name="Baba T."/>
            <person name="Wanner B.L."/>
            <person name="Mori H."/>
            <person name="Horiuchi T."/>
        </authorList>
    </citation>
    <scope>NUCLEOTIDE SEQUENCE [LARGE SCALE GENOMIC DNA]</scope>
    <source>
        <strain>K12 / W3110 / ATCC 27325 / DSM 5911</strain>
    </source>
</reference>
<reference key="4">
    <citation type="journal article" date="2005" name="Science">
        <title>Global topology analysis of the Escherichia coli inner membrane proteome.</title>
        <authorList>
            <person name="Daley D.O."/>
            <person name="Rapp M."/>
            <person name="Granseth E."/>
            <person name="Melen K."/>
            <person name="Drew D."/>
            <person name="von Heijne G."/>
        </authorList>
    </citation>
    <scope>TOPOLOGY [LARGE SCALE ANALYSIS]</scope>
    <source>
        <strain>K12 / MG1655 / ATCC 47076</strain>
    </source>
</reference>
<keyword id="KW-0997">Cell inner membrane</keyword>
<keyword id="KW-1003">Cell membrane</keyword>
<keyword id="KW-0472">Membrane</keyword>
<keyword id="KW-1185">Reference proteome</keyword>
<keyword id="KW-0812">Transmembrane</keyword>
<keyword id="KW-1133">Transmembrane helix</keyword>
<sequence>MNGTIYQRIEDNAHFRELVEKRQRFATILSIIMLAVYIGFILLIAFAPGWLGTPLNPNTSVTRGIPIGVGVIVISFVLTGIYIWRANGEFDRLNNEVLHEVQAS</sequence>
<feature type="chain" id="PRO_0000169724" description="Inner membrane protein YjcH">
    <location>
        <begin position="1"/>
        <end position="104"/>
    </location>
</feature>
<feature type="topological domain" description="Cytoplasmic" evidence="1">
    <location>
        <begin position="1"/>
        <end position="24"/>
    </location>
</feature>
<feature type="transmembrane region" description="Helical" evidence="1">
    <location>
        <begin position="25"/>
        <end position="47"/>
    </location>
</feature>
<feature type="topological domain" description="Periplasmic" evidence="1">
    <location>
        <begin position="48"/>
        <end position="61"/>
    </location>
</feature>
<feature type="transmembrane region" description="Helical" evidence="1">
    <location>
        <begin position="62"/>
        <end position="84"/>
    </location>
</feature>
<feature type="topological domain" description="Cytoplasmic" evidence="1">
    <location>
        <begin position="85"/>
        <end position="104"/>
    </location>
</feature>
<gene>
    <name type="primary">yjcH</name>
    <name type="ordered locus">b4068</name>
    <name type="ordered locus">JW4029</name>
</gene>
<organism>
    <name type="scientific">Escherichia coli (strain K12)</name>
    <dbReference type="NCBI Taxonomy" id="83333"/>
    <lineage>
        <taxon>Bacteria</taxon>
        <taxon>Pseudomonadati</taxon>
        <taxon>Pseudomonadota</taxon>
        <taxon>Gammaproteobacteria</taxon>
        <taxon>Enterobacterales</taxon>
        <taxon>Enterobacteriaceae</taxon>
        <taxon>Escherichia</taxon>
    </lineage>
</organism>
<evidence type="ECO:0000255" key="1"/>
<name>YJCH_ECOLI</name>
<dbReference type="EMBL" id="U00006">
    <property type="protein sequence ID" value="AAC43162.1"/>
    <property type="molecule type" value="Genomic_DNA"/>
</dbReference>
<dbReference type="EMBL" id="U00096">
    <property type="protein sequence ID" value="AAC77038.1"/>
    <property type="molecule type" value="Genomic_DNA"/>
</dbReference>
<dbReference type="EMBL" id="AP009048">
    <property type="protein sequence ID" value="BAE78070.1"/>
    <property type="molecule type" value="Genomic_DNA"/>
</dbReference>
<dbReference type="PIR" id="C65215">
    <property type="entry name" value="C65215"/>
</dbReference>
<dbReference type="RefSeq" id="NP_418492.1">
    <property type="nucleotide sequence ID" value="NC_000913.3"/>
</dbReference>
<dbReference type="RefSeq" id="WP_001014565.1">
    <property type="nucleotide sequence ID" value="NZ_STEB01000014.1"/>
</dbReference>
<dbReference type="BioGRID" id="4262674">
    <property type="interactions" value="320"/>
</dbReference>
<dbReference type="FunCoup" id="P0AF54">
    <property type="interactions" value="34"/>
</dbReference>
<dbReference type="STRING" id="511145.b4068"/>
<dbReference type="TCDB" id="9.B.136.1.1">
    <property type="family name" value="the 2 tms membrane protein, yjch (yjch) family"/>
</dbReference>
<dbReference type="jPOST" id="P0AF54"/>
<dbReference type="PaxDb" id="511145-b4068"/>
<dbReference type="EnsemblBacteria" id="AAC77038">
    <property type="protein sequence ID" value="AAC77038"/>
    <property type="gene ID" value="b4068"/>
</dbReference>
<dbReference type="GeneID" id="948574"/>
<dbReference type="KEGG" id="ecj:JW4029"/>
<dbReference type="KEGG" id="eco:b4068"/>
<dbReference type="KEGG" id="ecoc:C3026_21980"/>
<dbReference type="PATRIC" id="fig|1411691.4.peg.2636"/>
<dbReference type="EchoBASE" id="EB1887"/>
<dbReference type="eggNOG" id="COG3162">
    <property type="taxonomic scope" value="Bacteria"/>
</dbReference>
<dbReference type="HOGENOM" id="CLU_123372_2_1_6"/>
<dbReference type="InParanoid" id="P0AF54"/>
<dbReference type="OMA" id="KRGRFAW"/>
<dbReference type="OrthoDB" id="5297034at2"/>
<dbReference type="PhylomeDB" id="P0AF54"/>
<dbReference type="BioCyc" id="EcoCyc:YJCH-MONOMER"/>
<dbReference type="PHI-base" id="PHI:9228"/>
<dbReference type="PRO" id="PR:P0AF54"/>
<dbReference type="Proteomes" id="UP000000625">
    <property type="component" value="Chromosome"/>
</dbReference>
<dbReference type="GO" id="GO:0005886">
    <property type="term" value="C:plasma membrane"/>
    <property type="evidence" value="ECO:0000314"/>
    <property type="project" value="EcoCyc"/>
</dbReference>
<dbReference type="InterPro" id="IPR007436">
    <property type="entry name" value="DUF485"/>
</dbReference>
<dbReference type="InterPro" id="IPR052959">
    <property type="entry name" value="Inner_membrane_assoc"/>
</dbReference>
<dbReference type="PANTHER" id="PTHR38598">
    <property type="entry name" value="INNER MEMBRANE PROTEIN YJCH"/>
    <property type="match status" value="1"/>
</dbReference>
<dbReference type="PANTHER" id="PTHR38598:SF1">
    <property type="entry name" value="INNER MEMBRANE PROTEIN YJCH"/>
    <property type="match status" value="1"/>
</dbReference>
<dbReference type="Pfam" id="PF04341">
    <property type="entry name" value="DUF485"/>
    <property type="match status" value="1"/>
</dbReference>
<comment type="subcellular location">
    <subcellularLocation>
        <location>Cell inner membrane</location>
        <topology>Multi-pass membrane protein</topology>
    </subcellularLocation>
</comment>